<evidence type="ECO:0000250" key="1"/>
<evidence type="ECO:0000250" key="2">
    <source>
        <dbReference type="UniProtKB" id="P51580"/>
    </source>
</evidence>
<evidence type="ECO:0000305" key="3"/>
<keyword id="KW-0007">Acetylation</keyword>
<keyword id="KW-0963">Cytoplasm</keyword>
<keyword id="KW-0489">Methyltransferase</keyword>
<keyword id="KW-0597">Phosphoprotein</keyword>
<keyword id="KW-0949">S-adenosyl-L-methionine</keyword>
<keyword id="KW-0808">Transferase</keyword>
<dbReference type="EC" id="2.1.1.67"/>
<dbReference type="EMBL" id="AY827083">
    <property type="protein sequence ID" value="AAX37647.1"/>
    <property type="molecule type" value="mRNA"/>
</dbReference>
<dbReference type="EMBL" id="CR858654">
    <property type="protein sequence ID" value="CAH90867.1"/>
    <property type="molecule type" value="mRNA"/>
</dbReference>
<dbReference type="SMR" id="Q5RBJ3"/>
<dbReference type="KEGG" id="pon:100172405"/>
<dbReference type="GO" id="GO:0005737">
    <property type="term" value="C:cytoplasm"/>
    <property type="evidence" value="ECO:0007669"/>
    <property type="project" value="UniProtKB-SubCell"/>
</dbReference>
<dbReference type="GO" id="GO:0008119">
    <property type="term" value="F:thiopurine S-methyltransferase activity"/>
    <property type="evidence" value="ECO:0007669"/>
    <property type="project" value="UniProtKB-EC"/>
</dbReference>
<dbReference type="GO" id="GO:0032259">
    <property type="term" value="P:methylation"/>
    <property type="evidence" value="ECO:0007669"/>
    <property type="project" value="UniProtKB-KW"/>
</dbReference>
<dbReference type="FunFam" id="3.40.50.150:FF:000101">
    <property type="entry name" value="Thiopurine S-methyltransferase"/>
    <property type="match status" value="1"/>
</dbReference>
<dbReference type="Gene3D" id="3.40.50.150">
    <property type="entry name" value="Vaccinia Virus protein VP39"/>
    <property type="match status" value="1"/>
</dbReference>
<dbReference type="HAMAP" id="MF_00812">
    <property type="entry name" value="Thiopur_methtran"/>
    <property type="match status" value="1"/>
</dbReference>
<dbReference type="InterPro" id="IPR029063">
    <property type="entry name" value="SAM-dependent_MTases_sf"/>
</dbReference>
<dbReference type="InterPro" id="IPR025835">
    <property type="entry name" value="Thiopurine_S-MeTrfase"/>
</dbReference>
<dbReference type="InterPro" id="IPR008854">
    <property type="entry name" value="TPMT"/>
</dbReference>
<dbReference type="PANTHER" id="PTHR10259">
    <property type="entry name" value="THIOPURINE S-METHYLTRANSFERASE"/>
    <property type="match status" value="1"/>
</dbReference>
<dbReference type="PANTHER" id="PTHR10259:SF11">
    <property type="entry name" value="THIOPURINE S-METHYLTRANSFERASE"/>
    <property type="match status" value="1"/>
</dbReference>
<dbReference type="Pfam" id="PF05724">
    <property type="entry name" value="TPMT"/>
    <property type="match status" value="1"/>
</dbReference>
<dbReference type="PIRSF" id="PIRSF023956">
    <property type="entry name" value="Thiopurine_S-methyltransferase"/>
    <property type="match status" value="1"/>
</dbReference>
<dbReference type="SUPFAM" id="SSF53335">
    <property type="entry name" value="S-adenosyl-L-methionine-dependent methyltransferases"/>
    <property type="match status" value="1"/>
</dbReference>
<dbReference type="PROSITE" id="PS51585">
    <property type="entry name" value="SAM_MT_TPMT"/>
    <property type="match status" value="1"/>
</dbReference>
<comment type="catalytic activity">
    <reaction evidence="2">
        <text>S-adenosyl-L-methionine + a thiopurine = S-adenosyl-L-homocysteine + a thiopurine S-methylether.</text>
        <dbReference type="EC" id="2.1.1.67"/>
    </reaction>
</comment>
<comment type="subunit">
    <text evidence="2">Monomer.</text>
</comment>
<comment type="subcellular location">
    <subcellularLocation>
        <location evidence="1">Cytoplasm</location>
    </subcellularLocation>
</comment>
<comment type="similarity">
    <text evidence="3">Belongs to the class I-like SAM-binding methyltransferase superfamily. TPMT family.</text>
</comment>
<proteinExistence type="evidence at transcript level"/>
<accession>Q5RBJ3</accession>
<accession>Q3BCQ9</accession>
<protein>
    <recommendedName>
        <fullName>Thiopurine S-methyltransferase</fullName>
        <ecNumber>2.1.1.67</ecNumber>
    </recommendedName>
    <alternativeName>
        <fullName>Thiopurine methyltransferase</fullName>
    </alternativeName>
</protein>
<feature type="chain" id="PRO_0000220111" description="Thiopurine S-methyltransferase">
    <location>
        <begin position="1"/>
        <end position="245"/>
    </location>
</feature>
<feature type="binding site" evidence="1">
    <location>
        <begin position="29"/>
        <end position="40"/>
    </location>
    <ligand>
        <name>S-adenosyl-L-methionine</name>
        <dbReference type="ChEBI" id="CHEBI:59789"/>
    </ligand>
</feature>
<feature type="binding site" evidence="1">
    <location>
        <position position="40"/>
    </location>
    <ligand>
        <name>substrate</name>
    </ligand>
</feature>
<feature type="binding site" evidence="1">
    <location>
        <position position="69"/>
    </location>
    <ligand>
        <name>S-adenosyl-L-methionine</name>
        <dbReference type="ChEBI" id="CHEBI:59789"/>
    </ligand>
</feature>
<feature type="binding site" evidence="1">
    <location>
        <position position="90"/>
    </location>
    <ligand>
        <name>S-adenosyl-L-methionine</name>
        <dbReference type="ChEBI" id="CHEBI:59789"/>
    </ligand>
</feature>
<feature type="binding site" evidence="1">
    <location>
        <begin position="134"/>
        <end position="135"/>
    </location>
    <ligand>
        <name>S-adenosyl-L-methionine</name>
        <dbReference type="ChEBI" id="CHEBI:59789"/>
    </ligand>
</feature>
<feature type="binding site" evidence="1">
    <location>
        <position position="152"/>
    </location>
    <ligand>
        <name>S-adenosyl-L-methionine</name>
        <dbReference type="ChEBI" id="CHEBI:59789"/>
    </ligand>
</feature>
<feature type="modified residue" description="Phosphoserine" evidence="2">
    <location>
        <position position="14"/>
    </location>
</feature>
<feature type="modified residue" description="N6-acetyllysine" evidence="2">
    <location>
        <position position="58"/>
    </location>
</feature>
<feature type="sequence conflict" description="In Ref. 1; AAX37647." evidence="3" ref="1">
    <original>V</original>
    <variation>I</variation>
    <location>
        <position position="112"/>
    </location>
</feature>
<name>TPMT_PONPY</name>
<reference key="1">
    <citation type="journal article" date="2005" name="Pharmacogenet. Genomics">
        <title>Thiopurine S-methyltransferase pharmacogenetics: variant allele functional and comparative genomics.</title>
        <authorList>
            <person name="Salavaggione O.E."/>
            <person name="Wang L."/>
            <person name="Wiepert M."/>
            <person name="Yee V.C."/>
            <person name="Weinshilboum R.M."/>
        </authorList>
    </citation>
    <scope>NUCLEOTIDE SEQUENCE [MRNA]</scope>
</reference>
<reference key="2">
    <citation type="submission" date="2004-11" db="EMBL/GenBank/DDBJ databases">
        <authorList>
            <consortium name="The German cDNA consortium"/>
        </authorList>
    </citation>
    <scope>NUCLEOTIDE SEQUENCE [LARGE SCALE MRNA]</scope>
    <source>
        <tissue>Kidney</tissue>
    </source>
</reference>
<gene>
    <name type="primary">TPMT</name>
</gene>
<organism>
    <name type="scientific">Pongo pygmaeus</name>
    <name type="common">Bornean orangutan</name>
    <dbReference type="NCBI Taxonomy" id="9600"/>
    <lineage>
        <taxon>Eukaryota</taxon>
        <taxon>Metazoa</taxon>
        <taxon>Chordata</taxon>
        <taxon>Craniata</taxon>
        <taxon>Vertebrata</taxon>
        <taxon>Euteleostomi</taxon>
        <taxon>Mammalia</taxon>
        <taxon>Eutheria</taxon>
        <taxon>Euarchontoglires</taxon>
        <taxon>Primates</taxon>
        <taxon>Haplorrhini</taxon>
        <taxon>Catarrhini</taxon>
        <taxon>Hominidae</taxon>
        <taxon>Pongo</taxon>
    </lineage>
</organism>
<sequence>MDGIRTSLDIEEYSDTEVQKNQVLTLEEWQDKWVNGNTAFHQEQGHRLLKKHLDTFLKGESGLRVFFPLCGKAVEMKWFADRGHSVVGVEISELGIREFFTEQNLSYSEEPVTEIPGTKIFKSSSGNISLYCCSIFDLPRTNIGKFDMIWDRGALVAINPGDRKCYADTMLSLLGKKFQYLLCVLSYDPTKHPGPPFYVPHAEIERLFGKICNIHCLEKVDAFEERHKSWGIDYLFEKLYLLTEK</sequence>